<organism>
    <name type="scientific">Bacillus anthracis (strain CDC 684 / NRRL 3495)</name>
    <dbReference type="NCBI Taxonomy" id="568206"/>
    <lineage>
        <taxon>Bacteria</taxon>
        <taxon>Bacillati</taxon>
        <taxon>Bacillota</taxon>
        <taxon>Bacilli</taxon>
        <taxon>Bacillales</taxon>
        <taxon>Bacillaceae</taxon>
        <taxon>Bacillus</taxon>
        <taxon>Bacillus cereus group</taxon>
    </lineage>
</organism>
<feature type="chain" id="PRO_1000147591" description="Phosphatidylserine decarboxylase beta chain" evidence="1">
    <location>
        <begin position="1"/>
        <end position="225"/>
    </location>
</feature>
<feature type="chain" id="PRO_1000147592" description="Phosphatidylserine decarboxylase alpha chain" evidence="1">
    <location>
        <begin position="226"/>
        <end position="262"/>
    </location>
</feature>
<feature type="active site" description="Charge relay system; for autoendoproteolytic cleavage activity" evidence="1">
    <location>
        <position position="86"/>
    </location>
</feature>
<feature type="active site" description="Charge relay system; for autoendoproteolytic cleavage activity" evidence="1">
    <location>
        <position position="142"/>
    </location>
</feature>
<feature type="active site" description="Charge relay system; for autoendoproteolytic cleavage activity" evidence="1">
    <location>
        <position position="226"/>
    </location>
</feature>
<feature type="active site" description="Schiff-base intermediate with substrate; via pyruvic acid; for decarboxylase activity" evidence="1">
    <location>
        <position position="226"/>
    </location>
</feature>
<feature type="site" description="Cleavage (non-hydrolytic); by autocatalysis" evidence="1">
    <location>
        <begin position="225"/>
        <end position="226"/>
    </location>
</feature>
<feature type="modified residue" description="Pyruvic acid (Ser); by autocatalysis" evidence="1">
    <location>
        <position position="226"/>
    </location>
</feature>
<proteinExistence type="inferred from homology"/>
<comment type="function">
    <text evidence="1">Catalyzes the formation of phosphatidylethanolamine (PtdEtn) from phosphatidylserine (PtdSer).</text>
</comment>
<comment type="catalytic activity">
    <reaction evidence="1">
        <text>a 1,2-diacyl-sn-glycero-3-phospho-L-serine + H(+) = a 1,2-diacyl-sn-glycero-3-phosphoethanolamine + CO2</text>
        <dbReference type="Rhea" id="RHEA:20828"/>
        <dbReference type="ChEBI" id="CHEBI:15378"/>
        <dbReference type="ChEBI" id="CHEBI:16526"/>
        <dbReference type="ChEBI" id="CHEBI:57262"/>
        <dbReference type="ChEBI" id="CHEBI:64612"/>
        <dbReference type="EC" id="4.1.1.65"/>
    </reaction>
</comment>
<comment type="cofactor">
    <cofactor evidence="1">
        <name>pyruvate</name>
        <dbReference type="ChEBI" id="CHEBI:15361"/>
    </cofactor>
    <text evidence="1">Binds 1 pyruvoyl group covalently per subunit.</text>
</comment>
<comment type="pathway">
    <text evidence="1">Phospholipid metabolism; phosphatidylethanolamine biosynthesis; phosphatidylethanolamine from CDP-diacylglycerol: step 2/2.</text>
</comment>
<comment type="subunit">
    <text evidence="1">Heterodimer of a large membrane-associated beta subunit and a small pyruvoyl-containing alpha subunit.</text>
</comment>
<comment type="subcellular location">
    <subcellularLocation>
        <location evidence="1">Cell membrane</location>
        <topology evidence="1">Peripheral membrane protein</topology>
    </subcellularLocation>
</comment>
<comment type="PTM">
    <text evidence="1">Is synthesized initially as an inactive proenzyme. Formation of the active enzyme involves a self-maturation process in which the active site pyruvoyl group is generated from an internal serine residue via an autocatalytic post-translational modification. Two non-identical subunits are generated from the proenzyme in this reaction, and the pyruvate is formed at the N-terminus of the alpha chain, which is derived from the carboxyl end of the proenzyme. The autoendoproteolytic cleavage occurs by a canonical serine protease mechanism, in which the side chain hydroxyl group of the serine supplies its oxygen atom to form the C-terminus of the beta chain, while the remainder of the serine residue undergoes an oxidative deamination to produce ammonia and the pyruvoyl prosthetic group on the alpha chain. During this reaction, the Ser that is part of the protease active site of the proenzyme becomes the pyruvoyl prosthetic group, which constitutes an essential element of the active site of the mature decarboxylase.</text>
</comment>
<comment type="similarity">
    <text evidence="1">Belongs to the phosphatidylserine decarboxylase family. PSD-B subfamily. Prokaryotic type I sub-subfamily.</text>
</comment>
<protein>
    <recommendedName>
        <fullName evidence="1">Phosphatidylserine decarboxylase proenzyme</fullName>
        <ecNumber evidence="1">4.1.1.65</ecNumber>
    </recommendedName>
    <component>
        <recommendedName>
            <fullName evidence="1">Phosphatidylserine decarboxylase alpha chain</fullName>
        </recommendedName>
    </component>
    <component>
        <recommendedName>
            <fullName evidence="1">Phosphatidylserine decarboxylase beta chain</fullName>
        </recommendedName>
    </component>
</protein>
<name>PSD_BACAC</name>
<gene>
    <name evidence="1" type="primary">psd</name>
    <name type="ordered locus">BAMEG_4601</name>
</gene>
<keyword id="KW-1003">Cell membrane</keyword>
<keyword id="KW-0210">Decarboxylase</keyword>
<keyword id="KW-0444">Lipid biosynthesis</keyword>
<keyword id="KW-0443">Lipid metabolism</keyword>
<keyword id="KW-0456">Lyase</keyword>
<keyword id="KW-0472">Membrane</keyword>
<keyword id="KW-0594">Phospholipid biosynthesis</keyword>
<keyword id="KW-1208">Phospholipid metabolism</keyword>
<keyword id="KW-0670">Pyruvate</keyword>
<keyword id="KW-0865">Zymogen</keyword>
<dbReference type="EC" id="4.1.1.65" evidence="1"/>
<dbReference type="EMBL" id="CP001215">
    <property type="protein sequence ID" value="ACP15573.1"/>
    <property type="molecule type" value="Genomic_DNA"/>
</dbReference>
<dbReference type="RefSeq" id="WP_001255013.1">
    <property type="nucleotide sequence ID" value="NC_012581.1"/>
</dbReference>
<dbReference type="SMR" id="C3L5U2"/>
<dbReference type="KEGG" id="bah:BAMEG_4601"/>
<dbReference type="HOGENOM" id="CLU_029061_4_0_9"/>
<dbReference type="UniPathway" id="UPA00558">
    <property type="reaction ID" value="UER00616"/>
</dbReference>
<dbReference type="GO" id="GO:0005886">
    <property type="term" value="C:plasma membrane"/>
    <property type="evidence" value="ECO:0007669"/>
    <property type="project" value="UniProtKB-SubCell"/>
</dbReference>
<dbReference type="GO" id="GO:0004609">
    <property type="term" value="F:phosphatidylserine decarboxylase activity"/>
    <property type="evidence" value="ECO:0007669"/>
    <property type="project" value="UniProtKB-UniRule"/>
</dbReference>
<dbReference type="GO" id="GO:0006646">
    <property type="term" value="P:phosphatidylethanolamine biosynthetic process"/>
    <property type="evidence" value="ECO:0007669"/>
    <property type="project" value="UniProtKB-UniRule"/>
</dbReference>
<dbReference type="HAMAP" id="MF_00662">
    <property type="entry name" value="PS_decarb_PSD_B_type1"/>
    <property type="match status" value="1"/>
</dbReference>
<dbReference type="InterPro" id="IPR003817">
    <property type="entry name" value="PS_Dcarbxylase"/>
</dbReference>
<dbReference type="InterPro" id="IPR033177">
    <property type="entry name" value="PSD-B"/>
</dbReference>
<dbReference type="InterPro" id="IPR033178">
    <property type="entry name" value="PSD_type1_pro"/>
</dbReference>
<dbReference type="NCBIfam" id="NF002853">
    <property type="entry name" value="PRK03140.1"/>
    <property type="match status" value="1"/>
</dbReference>
<dbReference type="NCBIfam" id="TIGR00163">
    <property type="entry name" value="PS_decarb"/>
    <property type="match status" value="1"/>
</dbReference>
<dbReference type="PANTHER" id="PTHR10067">
    <property type="entry name" value="PHOSPHATIDYLSERINE DECARBOXYLASE"/>
    <property type="match status" value="1"/>
</dbReference>
<dbReference type="PANTHER" id="PTHR10067:SF6">
    <property type="entry name" value="PHOSPHATIDYLSERINE DECARBOXYLASE PROENZYME, MITOCHONDRIAL"/>
    <property type="match status" value="1"/>
</dbReference>
<dbReference type="Pfam" id="PF02666">
    <property type="entry name" value="PS_Dcarbxylase"/>
    <property type="match status" value="1"/>
</dbReference>
<reference key="1">
    <citation type="submission" date="2008-10" db="EMBL/GenBank/DDBJ databases">
        <title>Genome sequence of Bacillus anthracis str. CDC 684.</title>
        <authorList>
            <person name="Dodson R.J."/>
            <person name="Munk A.C."/>
            <person name="Brettin T."/>
            <person name="Bruce D."/>
            <person name="Detter C."/>
            <person name="Tapia R."/>
            <person name="Han C."/>
            <person name="Sutton G."/>
            <person name="Sims D."/>
        </authorList>
    </citation>
    <scope>NUCLEOTIDE SEQUENCE [LARGE SCALE GENOMIC DNA]</scope>
    <source>
        <strain>CDC 684 / NRRL 3495</strain>
    </source>
</reference>
<accession>C3L5U2</accession>
<evidence type="ECO:0000255" key="1">
    <source>
        <dbReference type="HAMAP-Rule" id="MF_00662"/>
    </source>
</evidence>
<sequence length="262" mass="29906">MRRTLYRLMIELTNGRFTSYTLRKFAQSRLSSIIIPSYAKVFQINQDEMEKGLKEYRTLHELFTRKLKEGKRSIDTDASSIVSPVDGVFADHGPIEDTKTFDIKGKRYSIVDMLGNEERAQRYAGGTYMVIYLSPSHYHRIHSPLSGSVTERFVLGRKSYPVNAAGMEYGKEPLSKNYRSVTEVNSDGEHMALVKVGAMFVNSIELLHERDTVQKGEEMAYFTFGSTVVLLFEKDMIEVVQELKSGQELRLGEKIATRLAHK</sequence>